<comment type="function">
    <text evidence="1">Involved in lipopolysaccharide (LPS) biosynthesis. Translocates lipid A-core from the inner to the outer leaflet of the inner membrane. Transmembrane domains (TMD) form a pore in the inner membrane and the ATP-binding domain (NBD) is responsible for energy generation.</text>
</comment>
<comment type="catalytic activity">
    <reaction evidence="1">
        <text>ATP + H2O + lipid A-core oligosaccharideSide 1 = ADP + phosphate + lipid A-core oligosaccharideSide 2.</text>
        <dbReference type="EC" id="7.5.2.6"/>
    </reaction>
</comment>
<comment type="subunit">
    <text evidence="1">Homodimer.</text>
</comment>
<comment type="subcellular location">
    <subcellularLocation>
        <location evidence="1">Cell inner membrane</location>
        <topology evidence="1">Multi-pass membrane protein</topology>
    </subcellularLocation>
</comment>
<comment type="domain">
    <text evidence="1">In MsbA the ATP-binding domain (NBD) and the transmembrane domain (TMD) are fused.</text>
</comment>
<comment type="similarity">
    <text evidence="1">Belongs to the ABC transporter superfamily. Lipid exporter (TC 3.A.1.106) family.</text>
</comment>
<evidence type="ECO:0000255" key="1">
    <source>
        <dbReference type="HAMAP-Rule" id="MF_01703"/>
    </source>
</evidence>
<protein>
    <recommendedName>
        <fullName evidence="1">ATP-dependent lipid A-core flippase</fullName>
        <ecNumber evidence="1">7.5.2.6</ecNumber>
    </recommendedName>
    <alternativeName>
        <fullName evidence="1">Lipid A export ATP-binding/permease protein MsbA</fullName>
    </alternativeName>
</protein>
<accession>Q2KYS6</accession>
<feature type="chain" id="PRO_0000271615" description="ATP-dependent lipid A-core flippase">
    <location>
        <begin position="1"/>
        <end position="591"/>
    </location>
</feature>
<feature type="transmembrane region" description="Helical" evidence="1">
    <location>
        <begin position="34"/>
        <end position="54"/>
    </location>
</feature>
<feature type="transmembrane region" description="Helical" evidence="1">
    <location>
        <begin position="71"/>
        <end position="91"/>
    </location>
</feature>
<feature type="transmembrane region" description="Helical" evidence="1">
    <location>
        <begin position="158"/>
        <end position="178"/>
    </location>
</feature>
<feature type="transmembrane region" description="Helical" evidence="1">
    <location>
        <begin position="258"/>
        <end position="278"/>
    </location>
</feature>
<feature type="transmembrane region" description="Helical" evidence="1">
    <location>
        <begin position="285"/>
        <end position="305"/>
    </location>
</feature>
<feature type="domain" description="ABC transmembrane type-1" evidence="1">
    <location>
        <begin position="35"/>
        <end position="317"/>
    </location>
</feature>
<feature type="domain" description="ABC transporter" evidence="1">
    <location>
        <begin position="350"/>
        <end position="586"/>
    </location>
</feature>
<feature type="binding site" evidence="1">
    <location>
        <begin position="384"/>
        <end position="391"/>
    </location>
    <ligand>
        <name>ATP</name>
        <dbReference type="ChEBI" id="CHEBI:30616"/>
    </ligand>
</feature>
<keyword id="KW-0067">ATP-binding</keyword>
<keyword id="KW-0997">Cell inner membrane</keyword>
<keyword id="KW-1003">Cell membrane</keyword>
<keyword id="KW-0445">Lipid transport</keyword>
<keyword id="KW-0472">Membrane</keyword>
<keyword id="KW-0547">Nucleotide-binding</keyword>
<keyword id="KW-1185">Reference proteome</keyword>
<keyword id="KW-1278">Translocase</keyword>
<keyword id="KW-0812">Transmembrane</keyword>
<keyword id="KW-1133">Transmembrane helix</keyword>
<keyword id="KW-0813">Transport</keyword>
<sequence>MIPGVREATAGHEPVKAELWKRIYSRVGSHWKGLILAVLLMAGAAATQPTLAVIMKPLIDGGFAGDKPQYIWSVPLAVIGLILLRGVCNFFSDYLLAWVANNVLLGIRREMFDRLLGLPDADFKRGDTGRLLNRFTIDAGNVTGYATDVITVLVRETLVVISLIAVLLYMSWLLTVIILVVMPISVWIARSFARRLRRINRETVNMNAELTRVVSEGIDGQRVIKLFDGYEAERGRFAYVNARLRRFAMRTAVADAALTPLTQVCIAVAVGAVIAVALGQANAGTLTAGAFAAFMSALAQIFDPIKRLTNLASKMQKMLVSAESVFTLVDQIPEVDEGQRTLAEPVRGKIEFRQIGHRFPEADRNTISDVSFTVEPGQTVALVGRSGSGKTTLVNMLPRFVLPTEGSILIDDVPINDVQLNSLRSHLSLVSQDVVLFDDTIAANVGYGALGKADDQRIHDALAAANLRDFVDSLPKGIHTPVGENAARLSGGQRQRLAIARALIKNAPILILDEATSALDNESERQVQSSLDRLMRGRTTLVIAHRLSTVQNADRIIVLDAGRIVEHGAHTELLAAGGLYATLYNMQFRED</sequence>
<reference key="1">
    <citation type="journal article" date="2006" name="J. Bacteriol.">
        <title>Comparison of the genome sequence of the poultry pathogen Bordetella avium with those of B. bronchiseptica, B. pertussis, and B. parapertussis reveals extensive diversity in surface structures associated with host interaction.</title>
        <authorList>
            <person name="Sebaihia M."/>
            <person name="Preston A."/>
            <person name="Maskell D.J."/>
            <person name="Kuzmiak H."/>
            <person name="Connell T.D."/>
            <person name="King N.D."/>
            <person name="Orndorff P.E."/>
            <person name="Miyamoto D.M."/>
            <person name="Thomson N.R."/>
            <person name="Harris D."/>
            <person name="Goble A."/>
            <person name="Lord A."/>
            <person name="Murphy L."/>
            <person name="Quail M.A."/>
            <person name="Rutter S."/>
            <person name="Squares R."/>
            <person name="Squares S."/>
            <person name="Woodward J."/>
            <person name="Parkhill J."/>
            <person name="Temple L.M."/>
        </authorList>
    </citation>
    <scope>NUCLEOTIDE SEQUENCE [LARGE SCALE GENOMIC DNA]</scope>
    <source>
        <strain>197N</strain>
    </source>
</reference>
<proteinExistence type="inferred from homology"/>
<name>MSBA_BORA1</name>
<organism>
    <name type="scientific">Bordetella avium (strain 197N)</name>
    <dbReference type="NCBI Taxonomy" id="360910"/>
    <lineage>
        <taxon>Bacteria</taxon>
        <taxon>Pseudomonadati</taxon>
        <taxon>Pseudomonadota</taxon>
        <taxon>Betaproteobacteria</taxon>
        <taxon>Burkholderiales</taxon>
        <taxon>Alcaligenaceae</taxon>
        <taxon>Bordetella</taxon>
    </lineage>
</organism>
<dbReference type="EC" id="7.5.2.6" evidence="1"/>
<dbReference type="EMBL" id="AM167904">
    <property type="protein sequence ID" value="CAJ49839.1"/>
    <property type="molecule type" value="Genomic_DNA"/>
</dbReference>
<dbReference type="RefSeq" id="WP_012417890.1">
    <property type="nucleotide sequence ID" value="NC_010645.1"/>
</dbReference>
<dbReference type="SMR" id="Q2KYS6"/>
<dbReference type="STRING" id="360910.BAV2229"/>
<dbReference type="GeneID" id="92934658"/>
<dbReference type="KEGG" id="bav:BAV2229"/>
<dbReference type="eggNOG" id="COG1132">
    <property type="taxonomic scope" value="Bacteria"/>
</dbReference>
<dbReference type="HOGENOM" id="CLU_000604_84_3_4"/>
<dbReference type="OrthoDB" id="8554730at2"/>
<dbReference type="Proteomes" id="UP000001977">
    <property type="component" value="Chromosome"/>
</dbReference>
<dbReference type="GO" id="GO:0005886">
    <property type="term" value="C:plasma membrane"/>
    <property type="evidence" value="ECO:0007669"/>
    <property type="project" value="UniProtKB-SubCell"/>
</dbReference>
<dbReference type="GO" id="GO:0015421">
    <property type="term" value="F:ABC-type oligopeptide transporter activity"/>
    <property type="evidence" value="ECO:0007669"/>
    <property type="project" value="TreeGrafter"/>
</dbReference>
<dbReference type="GO" id="GO:0005524">
    <property type="term" value="F:ATP binding"/>
    <property type="evidence" value="ECO:0007669"/>
    <property type="project" value="UniProtKB-KW"/>
</dbReference>
<dbReference type="GO" id="GO:0016887">
    <property type="term" value="F:ATP hydrolysis activity"/>
    <property type="evidence" value="ECO:0007669"/>
    <property type="project" value="InterPro"/>
</dbReference>
<dbReference type="GO" id="GO:0034040">
    <property type="term" value="F:ATPase-coupled lipid transmembrane transporter activity"/>
    <property type="evidence" value="ECO:0007669"/>
    <property type="project" value="InterPro"/>
</dbReference>
<dbReference type="CDD" id="cd18552">
    <property type="entry name" value="ABC_6TM_MsbA_like"/>
    <property type="match status" value="1"/>
</dbReference>
<dbReference type="FunFam" id="3.40.50.300:FF:000221">
    <property type="entry name" value="Multidrug ABC transporter ATP-binding protein"/>
    <property type="match status" value="1"/>
</dbReference>
<dbReference type="Gene3D" id="1.20.1560.10">
    <property type="entry name" value="ABC transporter type 1, transmembrane domain"/>
    <property type="match status" value="1"/>
</dbReference>
<dbReference type="Gene3D" id="3.40.50.300">
    <property type="entry name" value="P-loop containing nucleotide triphosphate hydrolases"/>
    <property type="match status" value="1"/>
</dbReference>
<dbReference type="InterPro" id="IPR003593">
    <property type="entry name" value="AAA+_ATPase"/>
</dbReference>
<dbReference type="InterPro" id="IPR011527">
    <property type="entry name" value="ABC1_TM_dom"/>
</dbReference>
<dbReference type="InterPro" id="IPR036640">
    <property type="entry name" value="ABC1_TM_sf"/>
</dbReference>
<dbReference type="InterPro" id="IPR003439">
    <property type="entry name" value="ABC_transporter-like_ATP-bd"/>
</dbReference>
<dbReference type="InterPro" id="IPR017871">
    <property type="entry name" value="ABC_transporter-like_CS"/>
</dbReference>
<dbReference type="InterPro" id="IPR011917">
    <property type="entry name" value="ABC_transpr_lipidA"/>
</dbReference>
<dbReference type="InterPro" id="IPR027417">
    <property type="entry name" value="P-loop_NTPase"/>
</dbReference>
<dbReference type="InterPro" id="IPR039421">
    <property type="entry name" value="Type_1_exporter"/>
</dbReference>
<dbReference type="NCBIfam" id="TIGR02203">
    <property type="entry name" value="MsbA_lipidA"/>
    <property type="match status" value="1"/>
</dbReference>
<dbReference type="PANTHER" id="PTHR43394:SF1">
    <property type="entry name" value="ATP-BINDING CASSETTE SUB-FAMILY B MEMBER 10, MITOCHONDRIAL"/>
    <property type="match status" value="1"/>
</dbReference>
<dbReference type="PANTHER" id="PTHR43394">
    <property type="entry name" value="ATP-DEPENDENT PERMEASE MDL1, MITOCHONDRIAL"/>
    <property type="match status" value="1"/>
</dbReference>
<dbReference type="Pfam" id="PF00664">
    <property type="entry name" value="ABC_membrane"/>
    <property type="match status" value="1"/>
</dbReference>
<dbReference type="Pfam" id="PF00005">
    <property type="entry name" value="ABC_tran"/>
    <property type="match status" value="1"/>
</dbReference>
<dbReference type="SMART" id="SM00382">
    <property type="entry name" value="AAA"/>
    <property type="match status" value="1"/>
</dbReference>
<dbReference type="SUPFAM" id="SSF90123">
    <property type="entry name" value="ABC transporter transmembrane region"/>
    <property type="match status" value="1"/>
</dbReference>
<dbReference type="SUPFAM" id="SSF52540">
    <property type="entry name" value="P-loop containing nucleoside triphosphate hydrolases"/>
    <property type="match status" value="1"/>
</dbReference>
<dbReference type="PROSITE" id="PS50929">
    <property type="entry name" value="ABC_TM1F"/>
    <property type="match status" value="1"/>
</dbReference>
<dbReference type="PROSITE" id="PS00211">
    <property type="entry name" value="ABC_TRANSPORTER_1"/>
    <property type="match status" value="1"/>
</dbReference>
<dbReference type="PROSITE" id="PS50893">
    <property type="entry name" value="ABC_TRANSPORTER_2"/>
    <property type="match status" value="1"/>
</dbReference>
<dbReference type="PROSITE" id="PS51239">
    <property type="entry name" value="MSBA"/>
    <property type="match status" value="1"/>
</dbReference>
<gene>
    <name evidence="1" type="primary">msbA</name>
    <name type="ordered locus">BAV2229</name>
</gene>